<feature type="chain" id="PRO_1000085359" description="Replication initiation control protein YabA">
    <location>
        <begin position="1"/>
        <end position="107"/>
    </location>
</feature>
<feature type="binding site" evidence="1">
    <location>
        <position position="80"/>
    </location>
    <ligand>
        <name>Zn(2+)</name>
        <dbReference type="ChEBI" id="CHEBI:29105"/>
    </ligand>
</feature>
<feature type="binding site" evidence="1">
    <location>
        <position position="82"/>
    </location>
    <ligand>
        <name>Zn(2+)</name>
        <dbReference type="ChEBI" id="CHEBI:29105"/>
    </ligand>
</feature>
<feature type="binding site" evidence="1">
    <location>
        <position position="97"/>
    </location>
    <ligand>
        <name>Zn(2+)</name>
        <dbReference type="ChEBI" id="CHEBI:29105"/>
    </ligand>
</feature>
<feature type="binding site" evidence="1">
    <location>
        <position position="100"/>
    </location>
    <ligand>
        <name>Zn(2+)</name>
        <dbReference type="ChEBI" id="CHEBI:29105"/>
    </ligand>
</feature>
<evidence type="ECO:0000255" key="1">
    <source>
        <dbReference type="HAMAP-Rule" id="MF_01159"/>
    </source>
</evidence>
<gene>
    <name evidence="1" type="primary">yabA</name>
    <name type="ordered locus">SGO_1537</name>
</gene>
<protein>
    <recommendedName>
        <fullName evidence="1">Replication initiation control protein YabA</fullName>
    </recommendedName>
</protein>
<organism>
    <name type="scientific">Streptococcus gordonii (strain Challis / ATCC 35105 / BCRC 15272 / CH1 / DL1 / V288)</name>
    <dbReference type="NCBI Taxonomy" id="467705"/>
    <lineage>
        <taxon>Bacteria</taxon>
        <taxon>Bacillati</taxon>
        <taxon>Bacillota</taxon>
        <taxon>Bacilli</taxon>
        <taxon>Lactobacillales</taxon>
        <taxon>Streptococcaceae</taxon>
        <taxon>Streptococcus</taxon>
    </lineage>
</organism>
<name>YABA_STRGC</name>
<sequence length="107" mass="12461">MDKREIFDALDDFSQNLMLTLAEVEAIKKNLKSVIEENTVLRLENDKLRERLGEVEKTGPSKGGGQGRENLERIYLDGFHICTDFYGQRRDNDEEECAFCNELLFRE</sequence>
<dbReference type="EMBL" id="CP000725">
    <property type="protein sequence ID" value="ABV11009.1"/>
    <property type="molecule type" value="Genomic_DNA"/>
</dbReference>
<dbReference type="RefSeq" id="WP_008809472.1">
    <property type="nucleotide sequence ID" value="NC_009785.1"/>
</dbReference>
<dbReference type="SMR" id="A8AYF6"/>
<dbReference type="STRING" id="467705.SGO_1537"/>
<dbReference type="GeneID" id="93787819"/>
<dbReference type="KEGG" id="sgo:SGO_1537"/>
<dbReference type="eggNOG" id="COG4467">
    <property type="taxonomic scope" value="Bacteria"/>
</dbReference>
<dbReference type="HOGENOM" id="CLU_157169_0_0_9"/>
<dbReference type="Proteomes" id="UP000001131">
    <property type="component" value="Chromosome"/>
</dbReference>
<dbReference type="GO" id="GO:0009295">
    <property type="term" value="C:nucleoid"/>
    <property type="evidence" value="ECO:0007669"/>
    <property type="project" value="UniProtKB-SubCell"/>
</dbReference>
<dbReference type="GO" id="GO:0006260">
    <property type="term" value="P:DNA replication"/>
    <property type="evidence" value="ECO:0007669"/>
    <property type="project" value="UniProtKB-UniRule"/>
</dbReference>
<dbReference type="HAMAP" id="MF_01159">
    <property type="entry name" value="YabA"/>
    <property type="match status" value="1"/>
</dbReference>
<dbReference type="InterPro" id="IPR010377">
    <property type="entry name" value="YabA"/>
</dbReference>
<dbReference type="NCBIfam" id="NF009640">
    <property type="entry name" value="PRK13169.1-1"/>
    <property type="match status" value="1"/>
</dbReference>
<dbReference type="Pfam" id="PF06156">
    <property type="entry name" value="YabA"/>
    <property type="match status" value="1"/>
</dbReference>
<dbReference type="PIRSF" id="PIRSF021439">
    <property type="entry name" value="DUF972"/>
    <property type="match status" value="1"/>
</dbReference>
<comment type="function">
    <text evidence="1">Involved in control of chromosome replication initiation. Inhibits the cooperative binding of DnaA to the oriC region, thus negatively regulating initiation of chromosome replication. Inhibits the ability of DnaA-ATP to form a helix on DNA; does not disassemble preformed DnaA-DNA helices. Decreases the residence time of DnaA on the chromosome at its binding sites (oriC, replication forks and promoter-binding sites). Tethers DnaA to the replication machinery via the DNA polymerase beta sliding clamp subunit (dnaN). Associates with oriC and other DnaA targets on the chromosome in a DnaA-dependent manner.</text>
</comment>
<comment type="cofactor">
    <cofactor evidence="1">
        <name>Zn(2+)</name>
        <dbReference type="ChEBI" id="CHEBI:29105"/>
    </cofactor>
    <text evidence="1">Binds 1 zinc ion per subunit.</text>
</comment>
<comment type="subunit">
    <text evidence="1">Homotetramer. Interacts with both DnaA and DnaN, acting as a bridge between these two proteins.</text>
</comment>
<comment type="subcellular location">
    <subcellularLocation>
        <location evidence="1">Cytoplasm</location>
        <location evidence="1">Nucleoid</location>
    </subcellularLocation>
    <text evidence="1">Localizes in tight foci, which correspond to the replisome at mid-cell throughout the cell cycle.</text>
</comment>
<comment type="similarity">
    <text evidence="1">Belongs to the YabA family.</text>
</comment>
<accession>A8AYF6</accession>
<reference key="1">
    <citation type="journal article" date="2007" name="J. Bacteriol.">
        <title>Genome-wide transcriptional changes in Streptococcus gordonii in response to competence signaling peptide.</title>
        <authorList>
            <person name="Vickerman M.M."/>
            <person name="Iobst S."/>
            <person name="Jesionowski A.M."/>
            <person name="Gill S.R."/>
        </authorList>
    </citation>
    <scope>NUCLEOTIDE SEQUENCE [LARGE SCALE GENOMIC DNA]</scope>
    <source>
        <strain>Challis / ATCC 35105 / BCRC 15272 / CH1 / DL1 / V288</strain>
    </source>
</reference>
<keyword id="KW-0963">Cytoplasm</keyword>
<keyword id="KW-0235">DNA replication</keyword>
<keyword id="KW-0236">DNA replication inhibitor</keyword>
<keyword id="KW-0479">Metal-binding</keyword>
<keyword id="KW-1185">Reference proteome</keyword>
<keyword id="KW-0862">Zinc</keyword>
<proteinExistence type="inferred from homology"/>